<gene>
    <name type="primary">INS</name>
</gene>
<keyword id="KW-0002">3D-structure</keyword>
<keyword id="KW-0119">Carbohydrate metabolism</keyword>
<keyword id="KW-0165">Cleavage on pair of basic residues</keyword>
<keyword id="KW-0903">Direct protein sequencing</keyword>
<keyword id="KW-1015">Disulfide bond</keyword>
<keyword id="KW-0313">Glucose metabolism</keyword>
<keyword id="KW-0372">Hormone</keyword>
<keyword id="KW-1185">Reference proteome</keyword>
<keyword id="KW-0964">Secreted</keyword>
<keyword id="KW-0732">Signal</keyword>
<sequence>MALWTRLRPLLALLALWPPPPARAFVNQHLCGSHLVEALYLVCGERGFFYTPKARREVEGPQVGALELAGGPGAGGLEGPPQKRGIVEQCCASVCSLYQLENYCN</sequence>
<dbReference type="EMBL" id="M54979">
    <property type="protein sequence ID" value="AAA30722.1"/>
    <property type="molecule type" value="mRNA"/>
</dbReference>
<dbReference type="PIR" id="A40909">
    <property type="entry name" value="IPBO"/>
</dbReference>
<dbReference type="PDB" id="1APH">
    <property type="method" value="X-ray"/>
    <property type="resolution" value="2.00 A"/>
    <property type="chains" value="A=85-105, B=25-54"/>
</dbReference>
<dbReference type="PDB" id="1BPH">
    <property type="method" value="X-ray"/>
    <property type="resolution" value="2.00 A"/>
    <property type="chains" value="A=85-105, B=25-54"/>
</dbReference>
<dbReference type="PDB" id="1CPH">
    <property type="method" value="X-ray"/>
    <property type="resolution" value="1.90 A"/>
    <property type="chains" value="A=85-105, B=25-54"/>
</dbReference>
<dbReference type="PDB" id="1DPH">
    <property type="method" value="X-ray"/>
    <property type="resolution" value="1.90 A"/>
    <property type="chains" value="A=85-105, B=25-54"/>
</dbReference>
<dbReference type="PDB" id="1HO0">
    <property type="method" value="NMR"/>
    <property type="chains" value="A=25-54"/>
</dbReference>
<dbReference type="PDB" id="1PID">
    <property type="method" value="X-ray"/>
    <property type="resolution" value="1.30 A"/>
    <property type="chains" value="A/C=85-105, B/D=25-49"/>
</dbReference>
<dbReference type="PDB" id="2A3G">
    <property type="method" value="X-ray"/>
    <property type="resolution" value="2.25 A"/>
    <property type="chains" value="A/C=85-105, B/D=25-54"/>
</dbReference>
<dbReference type="PDB" id="2BN1">
    <property type="method" value="X-ray"/>
    <property type="resolution" value="1.40 A"/>
    <property type="chains" value="A=85-105, B=25-54"/>
</dbReference>
<dbReference type="PDB" id="2BN3">
    <property type="method" value="X-ray"/>
    <property type="resolution" value="1.40 A"/>
    <property type="chains" value="A=85-105, B=25-54"/>
</dbReference>
<dbReference type="PDB" id="2INS">
    <property type="method" value="X-ray"/>
    <property type="resolution" value="2.50 A"/>
    <property type="chains" value="A/C=85-105, B/D=26-54"/>
</dbReference>
<dbReference type="PDB" id="2ZP6">
    <property type="method" value="X-ray"/>
    <property type="resolution" value="2.56 A"/>
    <property type="chains" value="A/C=85-105, B/D=25-54"/>
</dbReference>
<dbReference type="PDB" id="4BS3">
    <property type="method" value="X-ray"/>
    <property type="resolution" value="2.30 A"/>
    <property type="chains" value="A=85-105, B=25-54"/>
</dbReference>
<dbReference type="PDB" id="4E7T">
    <property type="method" value="X-ray"/>
    <property type="resolution" value="1.40 A"/>
    <property type="chains" value="A/C=85-105, B/D=25-54"/>
</dbReference>
<dbReference type="PDB" id="4E7U">
    <property type="method" value="X-ray"/>
    <property type="resolution" value="1.30 A"/>
    <property type="chains" value="A/C=85-105, B/D=25-54"/>
</dbReference>
<dbReference type="PDB" id="4E7V">
    <property type="method" value="X-ray"/>
    <property type="resolution" value="1.80 A"/>
    <property type="chains" value="1/3/5/A/C/E/G/I/K/M/O/Q/S/U/W/Y=85-105, 2/4/6/B/D/F/H/J/L/N/P/R/T/V/X/Z=25-54"/>
</dbReference>
<dbReference type="PDB" id="4I5Y">
    <property type="method" value="X-ray"/>
    <property type="resolution" value="1.80 A"/>
    <property type="chains" value="A=85-105, B=25-54"/>
</dbReference>
<dbReference type="PDB" id="4I5Z">
    <property type="method" value="X-ray"/>
    <property type="resolution" value="1.80 A"/>
    <property type="chains" value="A=85-105, B=25-54"/>
</dbReference>
<dbReference type="PDB" id="4IDW">
    <property type="method" value="X-ray"/>
    <property type="resolution" value="2.70 A"/>
    <property type="chains" value="A/C=85-105, B/D=25-54"/>
</dbReference>
<dbReference type="PDB" id="4IHN">
    <property type="method" value="X-ray"/>
    <property type="resolution" value="1.16 A"/>
    <property type="chains" value="A=85-105, B=25-54"/>
</dbReference>
<dbReference type="PDB" id="4M4F">
    <property type="method" value="X-ray"/>
    <property type="resolution" value="1.90 A"/>
    <property type="chains" value="A/C=85-105, B/D=25-54"/>
</dbReference>
<dbReference type="PDB" id="4M4H">
    <property type="method" value="X-ray"/>
    <property type="resolution" value="1.90 A"/>
    <property type="chains" value="A/C=85-105, B/D=25-54"/>
</dbReference>
<dbReference type="PDB" id="4M4I">
    <property type="method" value="X-ray"/>
    <property type="resolution" value="1.90 A"/>
    <property type="chains" value="A/C=85-105, B/D=25-54"/>
</dbReference>
<dbReference type="PDB" id="4M4J">
    <property type="method" value="X-ray"/>
    <property type="resolution" value="1.90 A"/>
    <property type="chains" value="A/C=85-105, B/D=25-54"/>
</dbReference>
<dbReference type="PDB" id="4M4L">
    <property type="method" value="X-ray"/>
    <property type="resolution" value="1.45 A"/>
    <property type="chains" value="A/C=85-105, B/D=25-54"/>
</dbReference>
<dbReference type="PDB" id="4M4M">
    <property type="method" value="X-ray"/>
    <property type="resolution" value="1.50 A"/>
    <property type="chains" value="A/C=85-105, B/D=25-54"/>
</dbReference>
<dbReference type="PDB" id="5AZZ">
    <property type="method" value="X-ray"/>
    <property type="resolution" value="1.45 A"/>
    <property type="chains" value="A=85-105, B=25-54"/>
</dbReference>
<dbReference type="PDB" id="5KQV">
    <property type="method" value="X-ray"/>
    <property type="resolution" value="4.40 A"/>
    <property type="chains" value="A/I=85-105, B/J=25-54"/>
</dbReference>
<dbReference type="PDB" id="5MIZ">
    <property type="method" value="NMR"/>
    <property type="chains" value="A=85-105, B=25-54"/>
</dbReference>
<dbReference type="PDB" id="6KH8">
    <property type="method" value="NMR"/>
    <property type="chains" value="A=85-105, B=25-54"/>
</dbReference>
<dbReference type="PDB" id="6KH9">
    <property type="method" value="NMR"/>
    <property type="chains" value="A=85-105, B=25-54"/>
</dbReference>
<dbReference type="PDB" id="6KHA">
    <property type="method" value="NMR"/>
    <property type="chains" value="A=85-105, B=25-54"/>
</dbReference>
<dbReference type="PDB" id="6OR0">
    <property type="method" value="X-ray"/>
    <property type="resolution" value="1.55 A"/>
    <property type="chains" value="A=85-105, B=25-53"/>
</dbReference>
<dbReference type="PDB" id="6Q8Q">
    <property type="method" value="X-ray"/>
    <property type="resolution" value="2.00 A"/>
    <property type="chains" value="A=85-105, B=25-54"/>
</dbReference>
<dbReference type="PDB" id="6QQ7">
    <property type="method" value="X-ray"/>
    <property type="resolution" value="1.65 A"/>
    <property type="chains" value="A=85-105, B=25-54"/>
</dbReference>
<dbReference type="PDB" id="6QQG">
    <property type="method" value="X-ray"/>
    <property type="resolution" value="2.15 A"/>
    <property type="chains" value="A=85-105, B=25-54"/>
</dbReference>
<dbReference type="PDB" id="6QRH">
    <property type="method" value="X-ray"/>
    <property type="resolution" value="2.15 A"/>
    <property type="chains" value="A=85-105, B=25-54"/>
</dbReference>
<dbReference type="PDB" id="6QRK">
    <property type="method" value="X-ray"/>
    <property type="resolution" value="2.10 A"/>
    <property type="chains" value="A=85-105, B=25-54"/>
</dbReference>
<dbReference type="PDB" id="6ZHB">
    <property type="method" value="EM"/>
    <property type="resolution" value="3.25 A"/>
    <property type="chains" value="A/C=85-105, B/D=25-54"/>
</dbReference>
<dbReference type="PDB" id="6ZI8">
    <property type="method" value="X-ray"/>
    <property type="resolution" value="2.30 A"/>
    <property type="chains" value="A/B/C/D=1-105"/>
</dbReference>
<dbReference type="PDB" id="7ELJ">
    <property type="method" value="NMR"/>
    <property type="chains" value="A=85-105, B=25-54"/>
</dbReference>
<dbReference type="PDBsum" id="1APH"/>
<dbReference type="PDBsum" id="1BPH"/>
<dbReference type="PDBsum" id="1CPH"/>
<dbReference type="PDBsum" id="1DPH"/>
<dbReference type="PDBsum" id="1HO0"/>
<dbReference type="PDBsum" id="1PID"/>
<dbReference type="PDBsum" id="2A3G"/>
<dbReference type="PDBsum" id="2BN1"/>
<dbReference type="PDBsum" id="2BN3"/>
<dbReference type="PDBsum" id="2INS"/>
<dbReference type="PDBsum" id="2ZP6"/>
<dbReference type="PDBsum" id="4BS3"/>
<dbReference type="PDBsum" id="4E7T"/>
<dbReference type="PDBsum" id="4E7U"/>
<dbReference type="PDBsum" id="4E7V"/>
<dbReference type="PDBsum" id="4I5Y"/>
<dbReference type="PDBsum" id="4I5Z"/>
<dbReference type="PDBsum" id="4IDW"/>
<dbReference type="PDBsum" id="4IHN"/>
<dbReference type="PDBsum" id="4M4F"/>
<dbReference type="PDBsum" id="4M4H"/>
<dbReference type="PDBsum" id="4M4I"/>
<dbReference type="PDBsum" id="4M4J"/>
<dbReference type="PDBsum" id="4M4L"/>
<dbReference type="PDBsum" id="4M4M"/>
<dbReference type="PDBsum" id="5AZZ"/>
<dbReference type="PDBsum" id="5KQV"/>
<dbReference type="PDBsum" id="5MIZ"/>
<dbReference type="PDBsum" id="6KH8"/>
<dbReference type="PDBsum" id="6KH9"/>
<dbReference type="PDBsum" id="6KHA"/>
<dbReference type="PDBsum" id="6OR0"/>
<dbReference type="PDBsum" id="6Q8Q"/>
<dbReference type="PDBsum" id="6QQ7"/>
<dbReference type="PDBsum" id="6QQG"/>
<dbReference type="PDBsum" id="6QRH"/>
<dbReference type="PDBsum" id="6QRK"/>
<dbReference type="PDBsum" id="6ZHB"/>
<dbReference type="PDBsum" id="6ZI8"/>
<dbReference type="PDBsum" id="7ELJ"/>
<dbReference type="BMRB" id="P01317"/>
<dbReference type="SMR" id="P01317"/>
<dbReference type="DIP" id="DIP-52901N"/>
<dbReference type="FunCoup" id="P01317">
    <property type="interactions" value="95"/>
</dbReference>
<dbReference type="IntAct" id="P01317">
    <property type="interactions" value="5"/>
</dbReference>
<dbReference type="MINT" id="P01317"/>
<dbReference type="STRING" id="9913.ENSBTAP00000069398"/>
<dbReference type="Allergome" id="2118">
    <property type="allergen name" value="Bos d Insulin"/>
</dbReference>
<dbReference type="CarbonylDB" id="P01317"/>
<dbReference type="PaxDb" id="9913-ENSBTAP00000017289"/>
<dbReference type="ABCD" id="P01317">
    <property type="antibodies" value="4 sequenced antibodies"/>
</dbReference>
<dbReference type="eggNOG" id="ENOG502S5P5">
    <property type="taxonomic scope" value="Eukaryota"/>
</dbReference>
<dbReference type="InParanoid" id="P01317"/>
<dbReference type="OrthoDB" id="10019596at2759"/>
<dbReference type="EvolutionaryTrace" id="P01317"/>
<dbReference type="Proteomes" id="UP000009136">
    <property type="component" value="Unplaced"/>
</dbReference>
<dbReference type="GO" id="GO:0005615">
    <property type="term" value="C:extracellular space"/>
    <property type="evidence" value="ECO:0000314"/>
    <property type="project" value="AgBase"/>
</dbReference>
<dbReference type="GO" id="GO:0005179">
    <property type="term" value="F:hormone activity"/>
    <property type="evidence" value="ECO:0007669"/>
    <property type="project" value="UniProtKB-KW"/>
</dbReference>
<dbReference type="GO" id="GO:0042802">
    <property type="term" value="F:identical protein binding"/>
    <property type="evidence" value="ECO:0000353"/>
    <property type="project" value="IntAct"/>
</dbReference>
<dbReference type="GO" id="GO:0005158">
    <property type="term" value="F:insulin receptor binding"/>
    <property type="evidence" value="ECO:0000314"/>
    <property type="project" value="AgBase"/>
</dbReference>
<dbReference type="GO" id="GO:0035938">
    <property type="term" value="P:estradiol secretion"/>
    <property type="evidence" value="ECO:0000314"/>
    <property type="project" value="AgBase"/>
</dbReference>
<dbReference type="GO" id="GO:0007631">
    <property type="term" value="P:feeding behavior"/>
    <property type="evidence" value="ECO:0000314"/>
    <property type="project" value="AgBase"/>
</dbReference>
<dbReference type="GO" id="GO:0042593">
    <property type="term" value="P:glucose homeostasis"/>
    <property type="evidence" value="ECO:0000318"/>
    <property type="project" value="GO_Central"/>
</dbReference>
<dbReference type="GO" id="GO:0044381">
    <property type="term" value="P:glucose import in response to insulin stimulus"/>
    <property type="evidence" value="ECO:0000314"/>
    <property type="project" value="AgBase"/>
</dbReference>
<dbReference type="GO" id="GO:0006006">
    <property type="term" value="P:glucose metabolic process"/>
    <property type="evidence" value="ECO:0007669"/>
    <property type="project" value="UniProtKB-KW"/>
</dbReference>
<dbReference type="GO" id="GO:0043066">
    <property type="term" value="P:negative regulation of apoptotic process"/>
    <property type="evidence" value="ECO:0000315"/>
    <property type="project" value="AgBase"/>
</dbReference>
<dbReference type="GO" id="GO:0032099">
    <property type="term" value="P:negative regulation of appetite"/>
    <property type="evidence" value="ECO:0000314"/>
    <property type="project" value="AgBase"/>
</dbReference>
<dbReference type="GO" id="GO:1903488">
    <property type="term" value="P:negative regulation of lactation"/>
    <property type="evidence" value="ECO:0000314"/>
    <property type="project" value="AgBase"/>
</dbReference>
<dbReference type="GO" id="GO:0050995">
    <property type="term" value="P:negative regulation of lipid catabolic process"/>
    <property type="evidence" value="ECO:0000314"/>
    <property type="project" value="AgBase"/>
</dbReference>
<dbReference type="GO" id="GO:1903524">
    <property type="term" value="P:positive regulation of blood circulation"/>
    <property type="evidence" value="ECO:0000314"/>
    <property type="project" value="AgBase"/>
</dbReference>
<dbReference type="GO" id="GO:1903431">
    <property type="term" value="P:positive regulation of cell maturation"/>
    <property type="evidence" value="ECO:0000314"/>
    <property type="project" value="AgBase"/>
</dbReference>
<dbReference type="GO" id="GO:0010628">
    <property type="term" value="P:positive regulation of gene expression"/>
    <property type="evidence" value="ECO:0000314"/>
    <property type="project" value="AgBase"/>
</dbReference>
<dbReference type="GO" id="GO:0032024">
    <property type="term" value="P:positive regulation of insulin secretion"/>
    <property type="evidence" value="ECO:0000314"/>
    <property type="project" value="AgBase"/>
</dbReference>
<dbReference type="GO" id="GO:1903489">
    <property type="term" value="P:positive regulation of lactation"/>
    <property type="evidence" value="ECO:0000314"/>
    <property type="project" value="AgBase"/>
</dbReference>
<dbReference type="GO" id="GO:0033601">
    <property type="term" value="P:positive regulation of mammary gland epithelial cell proliferation"/>
    <property type="evidence" value="ECO:0000314"/>
    <property type="project" value="AgBase"/>
</dbReference>
<dbReference type="GO" id="GO:0090277">
    <property type="term" value="P:positive regulation of peptide hormone secretion"/>
    <property type="evidence" value="ECO:0000314"/>
    <property type="project" value="AgBase"/>
</dbReference>
<dbReference type="GO" id="GO:0051897">
    <property type="term" value="P:positive regulation of phosphatidylinositol 3-kinase/protein kinase B signal transduction"/>
    <property type="evidence" value="ECO:0000314"/>
    <property type="project" value="AgBase"/>
</dbReference>
<dbReference type="GO" id="GO:0050714">
    <property type="term" value="P:positive regulation of protein secretion"/>
    <property type="evidence" value="ECO:0000314"/>
    <property type="project" value="AgBase"/>
</dbReference>
<dbReference type="GO" id="GO:0035025">
    <property type="term" value="P:positive regulation of Rho protein signal transduction"/>
    <property type="evidence" value="ECO:0000314"/>
    <property type="project" value="AgBase"/>
</dbReference>
<dbReference type="GO" id="GO:0009306">
    <property type="term" value="P:protein secretion"/>
    <property type="evidence" value="ECO:0000315"/>
    <property type="project" value="AgBase"/>
</dbReference>
<dbReference type="GO" id="GO:1903544">
    <property type="term" value="P:response to butyrate"/>
    <property type="evidence" value="ECO:0000314"/>
    <property type="project" value="AgBase"/>
</dbReference>
<dbReference type="GO" id="GO:0032094">
    <property type="term" value="P:response to food"/>
    <property type="evidence" value="ECO:0000314"/>
    <property type="project" value="AgBase"/>
</dbReference>
<dbReference type="GO" id="GO:0009749">
    <property type="term" value="P:response to glucose"/>
    <property type="evidence" value="ECO:0000315"/>
    <property type="project" value="AgBase"/>
</dbReference>
<dbReference type="GO" id="GO:0060416">
    <property type="term" value="P:response to growth hormone"/>
    <property type="evidence" value="ECO:0000314"/>
    <property type="project" value="AgBase"/>
</dbReference>
<dbReference type="GO" id="GO:0009408">
    <property type="term" value="P:response to heat"/>
    <property type="evidence" value="ECO:0000314"/>
    <property type="project" value="AgBase"/>
</dbReference>
<dbReference type="GO" id="GO:1903576">
    <property type="term" value="P:response to L-arginine"/>
    <property type="evidence" value="ECO:0000314"/>
    <property type="project" value="AgBase"/>
</dbReference>
<dbReference type="GO" id="GO:0031667">
    <property type="term" value="P:response to nutrient levels"/>
    <property type="evidence" value="ECO:0000314"/>
    <property type="project" value="AgBase"/>
</dbReference>
<dbReference type="CDD" id="cd04367">
    <property type="entry name" value="IlGF_insulin_like"/>
    <property type="match status" value="1"/>
</dbReference>
<dbReference type="FunFam" id="1.10.100.10:FF:000003">
    <property type="entry name" value="Insulin"/>
    <property type="match status" value="1"/>
</dbReference>
<dbReference type="Gene3D" id="1.10.100.10">
    <property type="entry name" value="Insulin-like"/>
    <property type="match status" value="1"/>
</dbReference>
<dbReference type="InterPro" id="IPR004825">
    <property type="entry name" value="Insulin"/>
</dbReference>
<dbReference type="InterPro" id="IPR016179">
    <property type="entry name" value="Insulin-like"/>
</dbReference>
<dbReference type="InterPro" id="IPR036438">
    <property type="entry name" value="Insulin-like_sf"/>
</dbReference>
<dbReference type="InterPro" id="IPR022353">
    <property type="entry name" value="Insulin_CS"/>
</dbReference>
<dbReference type="InterPro" id="IPR022352">
    <property type="entry name" value="Insulin_family"/>
</dbReference>
<dbReference type="PANTHER" id="PTHR11454:SF9">
    <property type="entry name" value="INSULIN"/>
    <property type="match status" value="1"/>
</dbReference>
<dbReference type="PANTHER" id="PTHR11454">
    <property type="entry name" value="INSULIN/INSULIN GROWTH FACTOR"/>
    <property type="match status" value="1"/>
</dbReference>
<dbReference type="Pfam" id="PF00049">
    <property type="entry name" value="Insulin"/>
    <property type="match status" value="1"/>
</dbReference>
<dbReference type="PRINTS" id="PR00277">
    <property type="entry name" value="INSULIN"/>
</dbReference>
<dbReference type="PRINTS" id="PR00276">
    <property type="entry name" value="INSULINFAMLY"/>
</dbReference>
<dbReference type="SMART" id="SM00078">
    <property type="entry name" value="IlGF"/>
    <property type="match status" value="1"/>
</dbReference>
<dbReference type="SUPFAM" id="SSF56994">
    <property type="entry name" value="Insulin-like"/>
    <property type="match status" value="1"/>
</dbReference>
<dbReference type="PROSITE" id="PS00262">
    <property type="entry name" value="INSULIN"/>
    <property type="match status" value="1"/>
</dbReference>
<accession>P01317</accession>
<name>INS_BOVIN</name>
<evidence type="ECO:0000269" key="1">
    <source>
    </source>
</evidence>
<evidence type="ECO:0000269" key="2">
    <source>
    </source>
</evidence>
<evidence type="ECO:0000269" key="3">
    <source>
    </source>
</evidence>
<evidence type="ECO:0000269" key="4">
    <source>
    </source>
</evidence>
<evidence type="ECO:0000305" key="5"/>
<evidence type="ECO:0007829" key="6">
    <source>
        <dbReference type="PDB" id="4E7U"/>
    </source>
</evidence>
<evidence type="ECO:0007829" key="7">
    <source>
        <dbReference type="PDB" id="4IHN"/>
    </source>
</evidence>
<organism>
    <name type="scientific">Bos taurus</name>
    <name type="common">Bovine</name>
    <dbReference type="NCBI Taxonomy" id="9913"/>
    <lineage>
        <taxon>Eukaryota</taxon>
        <taxon>Metazoa</taxon>
        <taxon>Chordata</taxon>
        <taxon>Craniata</taxon>
        <taxon>Vertebrata</taxon>
        <taxon>Euteleostomi</taxon>
        <taxon>Mammalia</taxon>
        <taxon>Eutheria</taxon>
        <taxon>Laurasiatheria</taxon>
        <taxon>Artiodactyla</taxon>
        <taxon>Ruminantia</taxon>
        <taxon>Pecora</taxon>
        <taxon>Bovidae</taxon>
        <taxon>Bovinae</taxon>
        <taxon>Bos</taxon>
    </lineage>
</organism>
<feature type="signal peptide" evidence="1 2 4">
    <location>
        <begin position="1"/>
        <end position="24"/>
    </location>
</feature>
<feature type="peptide" id="PRO_0000015764" description="Insulin B chain" evidence="3">
    <location>
        <begin position="25"/>
        <end position="54"/>
    </location>
</feature>
<feature type="propeptide" id="PRO_0000015765" description="C peptide">
    <location>
        <begin position="57"/>
        <end position="82"/>
    </location>
</feature>
<feature type="peptide" id="PRO_0000015766" description="Insulin A chain" evidence="3">
    <location>
        <begin position="85"/>
        <end position="105"/>
    </location>
</feature>
<feature type="disulfide bond" description="Interchain (between B and A chains)" evidence="1">
    <location>
        <begin position="31"/>
        <end position="91"/>
    </location>
</feature>
<feature type="disulfide bond" description="Interchain (between B and A chains)" evidence="1">
    <location>
        <begin position="43"/>
        <end position="104"/>
    </location>
</feature>
<feature type="disulfide bond" evidence="1 4">
    <location>
        <begin position="90"/>
        <end position="95"/>
    </location>
</feature>
<feature type="helix" evidence="7">
    <location>
        <begin position="33"/>
        <end position="43"/>
    </location>
</feature>
<feature type="helix" evidence="7">
    <location>
        <begin position="44"/>
        <end position="46"/>
    </location>
</feature>
<feature type="strand" evidence="6">
    <location>
        <begin position="48"/>
        <end position="50"/>
    </location>
</feature>
<feature type="helix" evidence="7">
    <location>
        <begin position="86"/>
        <end position="90"/>
    </location>
</feature>
<feature type="turn" evidence="7">
    <location>
        <begin position="91"/>
        <end position="94"/>
    </location>
</feature>
<feature type="helix" evidence="7">
    <location>
        <begin position="97"/>
        <end position="101"/>
    </location>
</feature>
<protein>
    <recommendedName>
        <fullName>Insulin</fullName>
    </recommendedName>
    <component>
        <recommendedName>
            <fullName>Insulin B chain</fullName>
        </recommendedName>
    </component>
    <component>
        <recommendedName>
            <fullName>Insulin A chain</fullName>
        </recommendedName>
    </component>
</protein>
<comment type="function">
    <text>Insulin decreases blood glucose concentration. It increases cell permeability to monosaccharides, amino acids and fatty acids. It accelerates glycolysis, the pentose phosphate cycle, and glycogen synthesis in liver.</text>
</comment>
<comment type="subunit">
    <text evidence="1">Heterodimer of a B chain and an A chain linked by two disulfide bonds.</text>
</comment>
<comment type="interaction">
    <interactant intactId="EBI-3989070">
        <id>P01317</id>
    </interactant>
    <interactant intactId="EBI-3989070">
        <id>P01317</id>
        <label>INS</label>
    </interactant>
    <organismsDiffer>false</organismsDiffer>
    <experiments>6</experiments>
</comment>
<comment type="interaction">
    <interactant intactId="EBI-3989070">
        <id>P01317</id>
    </interactant>
    <interactant intactId="EBI-475981">
        <id>P08069</id>
        <label>IGF1R</label>
    </interactant>
    <organismsDiffer>true</organismsDiffer>
    <experiments>4</experiments>
</comment>
<comment type="interaction">
    <interactant intactId="EBI-3989070">
        <id>P01317</id>
    </interactant>
    <interactant intactId="EBI-475899">
        <id>P06213</id>
        <label>INSR</label>
    </interactant>
    <organismsDiffer>true</organismsDiffer>
    <experiments>5</experiments>
</comment>
<comment type="interaction">
    <interactant intactId="EBI-3989070">
        <id>P01317</id>
    </interactant>
    <interactant intactId="EBI-9984921">
        <id>P06213-2</id>
        <label>INSR</label>
    </interactant>
    <organismsDiffer>true</organismsDiffer>
    <experiments>2</experiments>
</comment>
<comment type="interaction">
    <interactant intactId="EBI-3989070">
        <id>P01317</id>
    </interactant>
    <interactant intactId="EBI-7016414">
        <id>A1S3N8</id>
        <label>Sama_0787</label>
    </interactant>
    <organismsDiffer>true</organismsDiffer>
    <experiments>2</experiments>
</comment>
<comment type="subcellular location">
    <subcellularLocation>
        <location>Secreted</location>
    </subcellularLocation>
</comment>
<comment type="similarity">
    <text evidence="5">Belongs to the insulin family.</text>
</comment>
<comment type="online information" name="Protein Spotlight">
    <link uri="https://www.proteinspotlight.org/back_issues/009"/>
    <text>Protein of the 20th century - Issue 9 of April 2001</text>
</comment>
<reference key="1">
    <citation type="journal article" date="1987" name="Mol. Endocrinol.">
        <title>Cloning and nucleotide sequence analysis of complementary deoxyribonucleic acid for bovine preproinsulin.</title>
        <authorList>
            <person name="D'Agostino J."/>
            <person name="Younes M.A."/>
            <person name="White J.W."/>
            <person name="Besch P.K."/>
            <person name="Field J.B."/>
            <person name="Frazier M.L."/>
        </authorList>
    </citation>
    <scope>NUCLEOTIDE SEQUENCE [MRNA]</scope>
</reference>
<reference key="2">
    <citation type="journal article" date="1971" name="J. Biol. Chem.">
        <title>The structure of bovine proinsulin.</title>
        <authorList>
            <person name="Nolan C."/>
            <person name="Margoliash E."/>
            <person name="Peterson J.D."/>
            <person name="Steiner D.F."/>
        </authorList>
    </citation>
    <scope>PROTEIN SEQUENCE OF 25-105</scope>
</reference>
<reference key="3">
    <citation type="journal article" date="1951" name="Biochem. J.">
        <title>The amino-acid sequence in the phenylalanyl chain of insulin. 2. The investigation of peptides from enzymic hydrolysates.</title>
        <authorList>
            <person name="Sanger F."/>
            <person name="Tuppy H."/>
        </authorList>
    </citation>
    <scope>PROTEIN SEQUENCE OF 25-54</scope>
</reference>
<reference key="4">
    <citation type="journal article" date="1971" name="J. Biol. Chem.">
        <title>Isolation and characterization of proinsulin C-peptide from bovine pancreas.</title>
        <authorList>
            <person name="Steiner D.F."/>
            <person name="Cho S."/>
            <person name="Oyer P.E."/>
            <person name="Terris S."/>
            <person name="Peterson J.D."/>
            <person name="Rubenstein A.H."/>
        </authorList>
    </citation>
    <scope>PROTEIN SEQUENCE OF 57-82</scope>
</reference>
<reference key="5">
    <citation type="journal article" date="1971" name="Eur. J. Biochem.">
        <title>Bovine proinsulin: amino acid sequence of the C-peptide isolated from pancreas.</title>
        <authorList>
            <person name="Salokangas A."/>
            <person name="Smyth D.G."/>
            <person name="Markussen J."/>
            <person name="Sundby F."/>
        </authorList>
    </citation>
    <scope>PROTEIN SEQUENCE OF 57-82</scope>
</reference>
<reference key="6">
    <citation type="journal article" date="1953" name="Biochem. J.">
        <title>The amino-acid sequence in the glycyl chain of insulin. 2. The investigation of peptides from enzymic hydrolysates.</title>
        <authorList>
            <person name="Sanger F."/>
            <person name="Thompson E.O.P."/>
        </authorList>
    </citation>
    <scope>PROTEIN SEQUENCE OF 85-105</scope>
</reference>
<reference key="7">
    <citation type="journal article" date="1955" name="Biochem. J.">
        <title>The disulphide bonds of insulin.</title>
        <authorList>
            <person name="Ryle A.P."/>
            <person name="Sanger F."/>
            <person name="Smith L.F."/>
            <person name="Kitai R."/>
        </authorList>
    </citation>
    <scope>PROTEIN SEQUENCE OF 25-54 AND 85-105</scope>
    <scope>DISULFIDE BONDS</scope>
</reference>
<reference key="8">
    <citation type="journal article" date="1982" name="Acta Crystallogr. B">
        <title>The structure of des-Phe b1 bovine insulin.</title>
        <authorList>
            <person name="Smith G.D."/>
            <person name="Duax W.L."/>
            <person name="Dodson E.J."/>
            <person name="Dodson G.G."/>
            <person name="de Graaf R.A.G."/>
            <person name="Reynolds C.D."/>
        </authorList>
    </citation>
    <scope>X-RAY CRYSTALLOGRAPHY (2.5 ANGSTROMS) OF 26-54</scope>
</reference>
<reference key="9">
    <citation type="journal article" date="1997" name="Proteins">
        <title>A model of insulin fibrils derived from the X-ray crystal structure of a monomeric insulin (despentapeptide insulin).</title>
        <authorList>
            <person name="Brange J."/>
            <person name="Dodson G.G."/>
            <person name="Edwards D.J."/>
            <person name="Holden P.H."/>
            <person name="Whittingham J.L."/>
        </authorList>
    </citation>
    <scope>X-RAY CRYSTALLOGRAPHY (1.3 ANGSTROMS) OF 25-49</scope>
</reference>
<proteinExistence type="evidence at protein level"/>